<feature type="chain" id="PRO_1000045862" description="Flagellar hook-basal body complex protein FliE">
    <location>
        <begin position="1"/>
        <end position="103"/>
    </location>
</feature>
<dbReference type="EMBL" id="BX571865">
    <property type="protein sequence ID" value="CAE14242.1"/>
    <property type="molecule type" value="Genomic_DNA"/>
</dbReference>
<dbReference type="RefSeq" id="WP_011146211.1">
    <property type="nucleotide sequence ID" value="NC_005126.1"/>
</dbReference>
<dbReference type="SMR" id="Q7N5J9"/>
<dbReference type="STRING" id="243265.plu1949"/>
<dbReference type="GeneID" id="48848221"/>
<dbReference type="KEGG" id="plu:plu1949"/>
<dbReference type="eggNOG" id="COG1677">
    <property type="taxonomic scope" value="Bacteria"/>
</dbReference>
<dbReference type="HOGENOM" id="CLU_147249_0_2_6"/>
<dbReference type="OrthoDB" id="8909229at2"/>
<dbReference type="Proteomes" id="UP000002514">
    <property type="component" value="Chromosome"/>
</dbReference>
<dbReference type="GO" id="GO:0009425">
    <property type="term" value="C:bacterial-type flagellum basal body"/>
    <property type="evidence" value="ECO:0007669"/>
    <property type="project" value="UniProtKB-SubCell"/>
</dbReference>
<dbReference type="GO" id="GO:0003774">
    <property type="term" value="F:cytoskeletal motor activity"/>
    <property type="evidence" value="ECO:0007669"/>
    <property type="project" value="InterPro"/>
</dbReference>
<dbReference type="GO" id="GO:0005198">
    <property type="term" value="F:structural molecule activity"/>
    <property type="evidence" value="ECO:0007669"/>
    <property type="project" value="InterPro"/>
</dbReference>
<dbReference type="GO" id="GO:0071973">
    <property type="term" value="P:bacterial-type flagellum-dependent cell motility"/>
    <property type="evidence" value="ECO:0007669"/>
    <property type="project" value="InterPro"/>
</dbReference>
<dbReference type="HAMAP" id="MF_00724">
    <property type="entry name" value="FliE"/>
    <property type="match status" value="1"/>
</dbReference>
<dbReference type="InterPro" id="IPR001624">
    <property type="entry name" value="FliE"/>
</dbReference>
<dbReference type="NCBIfam" id="TIGR00205">
    <property type="entry name" value="fliE"/>
    <property type="match status" value="1"/>
</dbReference>
<dbReference type="PANTHER" id="PTHR34653">
    <property type="match status" value="1"/>
</dbReference>
<dbReference type="PANTHER" id="PTHR34653:SF1">
    <property type="entry name" value="FLAGELLAR HOOK-BASAL BODY COMPLEX PROTEIN FLIE"/>
    <property type="match status" value="1"/>
</dbReference>
<dbReference type="Pfam" id="PF02049">
    <property type="entry name" value="FliE"/>
    <property type="match status" value="1"/>
</dbReference>
<dbReference type="PRINTS" id="PR01006">
    <property type="entry name" value="FLGHOOKFLIE"/>
</dbReference>
<comment type="subcellular location">
    <subcellularLocation>
        <location evidence="1">Bacterial flagellum basal body</location>
    </subcellularLocation>
</comment>
<comment type="similarity">
    <text evidence="1">Belongs to the FliE family.</text>
</comment>
<sequence length="103" mass="11089">MSIQAIESVLQLMQAQALQAASIAKPLPLQSGFASQLMAAVGKINQTRLNATKRAQDFTLGVPGVELNDVMVEMQKSSIALQIGVQAKNKLTASYQEIMNMQV</sequence>
<evidence type="ECO:0000255" key="1">
    <source>
        <dbReference type="HAMAP-Rule" id="MF_00724"/>
    </source>
</evidence>
<name>FLIE_PHOLL</name>
<reference key="1">
    <citation type="journal article" date="2003" name="Nat. Biotechnol.">
        <title>The genome sequence of the entomopathogenic bacterium Photorhabdus luminescens.</title>
        <authorList>
            <person name="Duchaud E."/>
            <person name="Rusniok C."/>
            <person name="Frangeul L."/>
            <person name="Buchrieser C."/>
            <person name="Givaudan A."/>
            <person name="Taourit S."/>
            <person name="Bocs S."/>
            <person name="Boursaux-Eude C."/>
            <person name="Chandler M."/>
            <person name="Charles J.-F."/>
            <person name="Dassa E."/>
            <person name="Derose R."/>
            <person name="Derzelle S."/>
            <person name="Freyssinet G."/>
            <person name="Gaudriault S."/>
            <person name="Medigue C."/>
            <person name="Lanois A."/>
            <person name="Powell K."/>
            <person name="Siguier P."/>
            <person name="Vincent R."/>
            <person name="Wingate V."/>
            <person name="Zouine M."/>
            <person name="Glaser P."/>
            <person name="Boemare N."/>
            <person name="Danchin A."/>
            <person name="Kunst F."/>
        </authorList>
    </citation>
    <scope>NUCLEOTIDE SEQUENCE [LARGE SCALE GENOMIC DNA]</scope>
    <source>
        <strain>DSM 15139 / CIP 105565 / TT01</strain>
    </source>
</reference>
<keyword id="KW-0975">Bacterial flagellum</keyword>
<keyword id="KW-1185">Reference proteome</keyword>
<proteinExistence type="inferred from homology"/>
<organism>
    <name type="scientific">Photorhabdus laumondii subsp. laumondii (strain DSM 15139 / CIP 105565 / TT01)</name>
    <name type="common">Photorhabdus luminescens subsp. laumondii</name>
    <dbReference type="NCBI Taxonomy" id="243265"/>
    <lineage>
        <taxon>Bacteria</taxon>
        <taxon>Pseudomonadati</taxon>
        <taxon>Pseudomonadota</taxon>
        <taxon>Gammaproteobacteria</taxon>
        <taxon>Enterobacterales</taxon>
        <taxon>Morganellaceae</taxon>
        <taxon>Photorhabdus</taxon>
    </lineage>
</organism>
<protein>
    <recommendedName>
        <fullName evidence="1">Flagellar hook-basal body complex protein FliE</fullName>
    </recommendedName>
</protein>
<accession>Q7N5J9</accession>
<gene>
    <name evidence="1" type="primary">fliE</name>
    <name type="ordered locus">plu1949</name>
</gene>